<organism>
    <name type="scientific">Xylella fastidiosa (strain Temecula1 / ATCC 700964)</name>
    <dbReference type="NCBI Taxonomy" id="183190"/>
    <lineage>
        <taxon>Bacteria</taxon>
        <taxon>Pseudomonadati</taxon>
        <taxon>Pseudomonadota</taxon>
        <taxon>Gammaproteobacteria</taxon>
        <taxon>Lysobacterales</taxon>
        <taxon>Lysobacteraceae</taxon>
        <taxon>Xylella</taxon>
    </lineage>
</organism>
<protein>
    <recommendedName>
        <fullName evidence="1">NADH-quinone oxidoreductase subunit K</fullName>
        <ecNumber evidence="1">7.1.1.-</ecNumber>
    </recommendedName>
    <alternativeName>
        <fullName evidence="1">NADH dehydrogenase I subunit K</fullName>
    </alternativeName>
    <alternativeName>
        <fullName evidence="1">NDH-1 subunit K</fullName>
    </alternativeName>
</protein>
<comment type="function">
    <text evidence="1">NDH-1 shuttles electrons from NADH, via FMN and iron-sulfur (Fe-S) centers, to quinones in the respiratory chain. The immediate electron acceptor for the enzyme in this species is believed to be ubiquinone. Couples the redox reaction to proton translocation (for every two electrons transferred, four hydrogen ions are translocated across the cytoplasmic membrane), and thus conserves the redox energy in a proton gradient.</text>
</comment>
<comment type="catalytic activity">
    <reaction evidence="1">
        <text>a quinone + NADH + 5 H(+)(in) = a quinol + NAD(+) + 4 H(+)(out)</text>
        <dbReference type="Rhea" id="RHEA:57888"/>
        <dbReference type="ChEBI" id="CHEBI:15378"/>
        <dbReference type="ChEBI" id="CHEBI:24646"/>
        <dbReference type="ChEBI" id="CHEBI:57540"/>
        <dbReference type="ChEBI" id="CHEBI:57945"/>
        <dbReference type="ChEBI" id="CHEBI:132124"/>
    </reaction>
</comment>
<comment type="subunit">
    <text evidence="1">NDH-1 is composed of 14 different subunits. Subunits NuoA, H, J, K, L, M, N constitute the membrane sector of the complex.</text>
</comment>
<comment type="subcellular location">
    <subcellularLocation>
        <location evidence="1">Cell inner membrane</location>
        <topology evidence="1">Multi-pass membrane protein</topology>
    </subcellularLocation>
</comment>
<comment type="similarity">
    <text evidence="1">Belongs to the complex I subunit 4L family.</text>
</comment>
<feature type="chain" id="PRO_0000390281" description="NADH-quinone oxidoreductase subunit K">
    <location>
        <begin position="1"/>
        <end position="101"/>
    </location>
</feature>
<feature type="transmembrane region" description="Helical" evidence="1">
    <location>
        <begin position="4"/>
        <end position="24"/>
    </location>
</feature>
<feature type="transmembrane region" description="Helical" evidence="1">
    <location>
        <begin position="30"/>
        <end position="50"/>
    </location>
</feature>
<feature type="transmembrane region" description="Helical" evidence="1">
    <location>
        <begin position="62"/>
        <end position="82"/>
    </location>
</feature>
<accession>Q87EP5</accession>
<keyword id="KW-0997">Cell inner membrane</keyword>
<keyword id="KW-1003">Cell membrane</keyword>
<keyword id="KW-0472">Membrane</keyword>
<keyword id="KW-0520">NAD</keyword>
<keyword id="KW-0874">Quinone</keyword>
<keyword id="KW-1185">Reference proteome</keyword>
<keyword id="KW-1278">Translocase</keyword>
<keyword id="KW-0812">Transmembrane</keyword>
<keyword id="KW-1133">Transmembrane helix</keyword>
<keyword id="KW-0813">Transport</keyword>
<keyword id="KW-0830">Ubiquinone</keyword>
<sequence length="101" mass="10794">MISLGHLLALGAVLFCISLAGIFLNRKNVIVLLMSIELMLLAVNVNFIAFSRQLGDTAGQLFVFFILTVAAAEAAIGLAILVTLFRTHHTINVAEVDALKG</sequence>
<evidence type="ECO:0000255" key="1">
    <source>
        <dbReference type="HAMAP-Rule" id="MF_01456"/>
    </source>
</evidence>
<name>NUOK_XYLFT</name>
<dbReference type="EC" id="7.1.1.-" evidence="1"/>
<dbReference type="EMBL" id="AE009442">
    <property type="protein sequence ID" value="AAO28144.1"/>
    <property type="molecule type" value="Genomic_DNA"/>
</dbReference>
<dbReference type="RefSeq" id="WP_004085293.1">
    <property type="nucleotide sequence ID" value="NC_004556.1"/>
</dbReference>
<dbReference type="SMR" id="Q87EP5"/>
<dbReference type="KEGG" id="xft:PD_0258"/>
<dbReference type="HOGENOM" id="CLU_144724_2_0_6"/>
<dbReference type="Proteomes" id="UP000002516">
    <property type="component" value="Chromosome"/>
</dbReference>
<dbReference type="GO" id="GO:0030964">
    <property type="term" value="C:NADH dehydrogenase complex"/>
    <property type="evidence" value="ECO:0007669"/>
    <property type="project" value="TreeGrafter"/>
</dbReference>
<dbReference type="GO" id="GO:0005886">
    <property type="term" value="C:plasma membrane"/>
    <property type="evidence" value="ECO:0007669"/>
    <property type="project" value="UniProtKB-SubCell"/>
</dbReference>
<dbReference type="GO" id="GO:0050136">
    <property type="term" value="F:NADH:ubiquinone reductase (non-electrogenic) activity"/>
    <property type="evidence" value="ECO:0007669"/>
    <property type="project" value="UniProtKB-UniRule"/>
</dbReference>
<dbReference type="GO" id="GO:0048038">
    <property type="term" value="F:quinone binding"/>
    <property type="evidence" value="ECO:0007669"/>
    <property type="project" value="UniProtKB-KW"/>
</dbReference>
<dbReference type="GO" id="GO:0042773">
    <property type="term" value="P:ATP synthesis coupled electron transport"/>
    <property type="evidence" value="ECO:0007669"/>
    <property type="project" value="InterPro"/>
</dbReference>
<dbReference type="FunFam" id="1.10.287.3510:FF:000001">
    <property type="entry name" value="NADH-quinone oxidoreductase subunit K"/>
    <property type="match status" value="1"/>
</dbReference>
<dbReference type="Gene3D" id="1.10.287.3510">
    <property type="match status" value="1"/>
</dbReference>
<dbReference type="HAMAP" id="MF_01456">
    <property type="entry name" value="NDH1_NuoK"/>
    <property type="match status" value="1"/>
</dbReference>
<dbReference type="InterPro" id="IPR001133">
    <property type="entry name" value="NADH_UbQ_OxRdtase_chain4L/K"/>
</dbReference>
<dbReference type="InterPro" id="IPR039428">
    <property type="entry name" value="NUOK/Mnh_C1-like"/>
</dbReference>
<dbReference type="NCBIfam" id="NF004320">
    <property type="entry name" value="PRK05715.1-2"/>
    <property type="match status" value="1"/>
</dbReference>
<dbReference type="NCBIfam" id="NF004321">
    <property type="entry name" value="PRK05715.1-3"/>
    <property type="match status" value="1"/>
</dbReference>
<dbReference type="NCBIfam" id="NF004323">
    <property type="entry name" value="PRK05715.1-5"/>
    <property type="match status" value="1"/>
</dbReference>
<dbReference type="PANTHER" id="PTHR11434:SF21">
    <property type="entry name" value="NADH DEHYDROGENASE SUBUNIT 4L-RELATED"/>
    <property type="match status" value="1"/>
</dbReference>
<dbReference type="PANTHER" id="PTHR11434">
    <property type="entry name" value="NADH-UBIQUINONE OXIDOREDUCTASE SUBUNIT ND4L"/>
    <property type="match status" value="1"/>
</dbReference>
<dbReference type="Pfam" id="PF00420">
    <property type="entry name" value="Oxidored_q2"/>
    <property type="match status" value="1"/>
</dbReference>
<gene>
    <name evidence="1" type="primary">nuoK</name>
    <name type="ordered locus">PD_0258</name>
</gene>
<reference key="1">
    <citation type="journal article" date="2003" name="J. Bacteriol.">
        <title>Comparative analyses of the complete genome sequences of Pierce's disease and citrus variegated chlorosis strains of Xylella fastidiosa.</title>
        <authorList>
            <person name="Van Sluys M.A."/>
            <person name="de Oliveira M.C."/>
            <person name="Monteiro-Vitorello C.B."/>
            <person name="Miyaki C.Y."/>
            <person name="Furlan L.R."/>
            <person name="Camargo L.E.A."/>
            <person name="da Silva A.C.R."/>
            <person name="Moon D.H."/>
            <person name="Takita M.A."/>
            <person name="Lemos E.G.M."/>
            <person name="Machado M.A."/>
            <person name="Ferro M.I.T."/>
            <person name="da Silva F.R."/>
            <person name="Goldman M.H.S."/>
            <person name="Goldman G.H."/>
            <person name="Lemos M.V.F."/>
            <person name="El-Dorry H."/>
            <person name="Tsai S.M."/>
            <person name="Carrer H."/>
            <person name="Carraro D.M."/>
            <person name="de Oliveira R.C."/>
            <person name="Nunes L.R."/>
            <person name="Siqueira W.J."/>
            <person name="Coutinho L.L."/>
            <person name="Kimura E.T."/>
            <person name="Ferro E.S."/>
            <person name="Harakava R."/>
            <person name="Kuramae E.E."/>
            <person name="Marino C.L."/>
            <person name="Giglioti E."/>
            <person name="Abreu I.L."/>
            <person name="Alves L.M.C."/>
            <person name="do Amaral A.M."/>
            <person name="Baia G.S."/>
            <person name="Blanco S.R."/>
            <person name="Brito M.S."/>
            <person name="Cannavan F.S."/>
            <person name="Celestino A.V."/>
            <person name="da Cunha A.F."/>
            <person name="Fenille R.C."/>
            <person name="Ferro J.A."/>
            <person name="Formighieri E.F."/>
            <person name="Kishi L.T."/>
            <person name="Leoni S.G."/>
            <person name="Oliveira A.R."/>
            <person name="Rosa V.E. Jr."/>
            <person name="Sassaki F.T."/>
            <person name="Sena J.A.D."/>
            <person name="de Souza A.A."/>
            <person name="Truffi D."/>
            <person name="Tsukumo F."/>
            <person name="Yanai G.M."/>
            <person name="Zaros L.G."/>
            <person name="Civerolo E.L."/>
            <person name="Simpson A.J.G."/>
            <person name="Almeida N.F. Jr."/>
            <person name="Setubal J.C."/>
            <person name="Kitajima J.P."/>
        </authorList>
    </citation>
    <scope>NUCLEOTIDE SEQUENCE [LARGE SCALE GENOMIC DNA]</scope>
    <source>
        <strain>Temecula1 / ATCC 700964</strain>
    </source>
</reference>
<proteinExistence type="inferred from homology"/>